<comment type="function">
    <text evidence="1">May catalyze a purine salvage reaction, the substrate is unknown.</text>
</comment>
<comment type="similarity">
    <text evidence="1">Belongs to the purine/pyrimidine phosphoribosyltransferase family. Archaeal HPRT subfamily.</text>
</comment>
<gene>
    <name type="ordered locus">Hqrw_2231</name>
</gene>
<sequence>MERLHESLHEAPIIDKDGYEYLVHPISNGVPVLEPGLLREVVIDIMQQSDFNVDKIVAPEAMGIHLATALSLQTDVPLVVIRKRSYGLPGEVALHKSTGYSESEMYINDIEAGDRILIIDDLLSTGGTLAAICGALDDIGTEIIDIVVVIRKIGQSAMDELEHDVTSLVDITVEDGEVTIQ</sequence>
<keyword id="KW-0660">Purine salvage</keyword>
<keyword id="KW-0808">Transferase</keyword>
<name>HPRL2_HALWC</name>
<protein>
    <recommendedName>
        <fullName evidence="1">HGPRTase-like protein 2</fullName>
        <ecNumber evidence="1">2.4.2.-</ecNumber>
    </recommendedName>
</protein>
<accession>G0LH85</accession>
<evidence type="ECO:0000255" key="1">
    <source>
        <dbReference type="HAMAP-Rule" id="MF_01467"/>
    </source>
</evidence>
<organism>
    <name type="scientific">Haloquadratum walsbyi (strain DSM 16854 / JCM 12705 / C23)</name>
    <dbReference type="NCBI Taxonomy" id="768065"/>
    <lineage>
        <taxon>Archaea</taxon>
        <taxon>Methanobacteriati</taxon>
        <taxon>Methanobacteriota</taxon>
        <taxon>Stenosarchaea group</taxon>
        <taxon>Halobacteria</taxon>
        <taxon>Halobacteriales</taxon>
        <taxon>Haloferacaceae</taxon>
        <taxon>Haloquadratum</taxon>
    </lineage>
</organism>
<feature type="chain" id="PRO_0000415457" description="HGPRTase-like protein 2">
    <location>
        <begin position="1"/>
        <end position="181"/>
    </location>
</feature>
<reference key="1">
    <citation type="journal article" date="2011" name="PLoS ONE">
        <title>Haloquadratum walsbyi: limited diversity in a global pond.</title>
        <authorList>
            <person name="Dyall-Smith M."/>
            <person name="Pfeiffer F."/>
            <person name="Klee K."/>
            <person name="Palm P."/>
            <person name="Gross K."/>
            <person name="Schuster S.C."/>
            <person name="Rampp M."/>
            <person name="Oesterhelt D."/>
        </authorList>
    </citation>
    <scope>NUCLEOTIDE SEQUENCE [LARGE SCALE GENOMIC DNA]</scope>
    <source>
        <strain>DSM 16854 / JCM 12705 / C23</strain>
    </source>
</reference>
<dbReference type="EC" id="2.4.2.-" evidence="1"/>
<dbReference type="EMBL" id="FR746099">
    <property type="protein sequence ID" value="CCC40119.1"/>
    <property type="molecule type" value="Genomic_DNA"/>
</dbReference>
<dbReference type="RefSeq" id="WP_011571316.1">
    <property type="nucleotide sequence ID" value="NC_017459.1"/>
</dbReference>
<dbReference type="SMR" id="G0LH85"/>
<dbReference type="GeneID" id="12446961"/>
<dbReference type="KEGG" id="hwc:Hqrw_2231"/>
<dbReference type="HOGENOM" id="CLU_126376_0_0_2"/>
<dbReference type="OrthoDB" id="8323at2157"/>
<dbReference type="Proteomes" id="UP000007954">
    <property type="component" value="Chromosome"/>
</dbReference>
<dbReference type="GO" id="GO:0016740">
    <property type="term" value="F:transferase activity"/>
    <property type="evidence" value="ECO:0007669"/>
    <property type="project" value="UniProtKB-KW"/>
</dbReference>
<dbReference type="GO" id="GO:0006166">
    <property type="term" value="P:purine ribonucleoside salvage"/>
    <property type="evidence" value="ECO:0007669"/>
    <property type="project" value="UniProtKB-KW"/>
</dbReference>
<dbReference type="CDD" id="cd06223">
    <property type="entry name" value="PRTases_typeI"/>
    <property type="match status" value="1"/>
</dbReference>
<dbReference type="Gene3D" id="3.40.50.2020">
    <property type="match status" value="1"/>
</dbReference>
<dbReference type="HAMAP" id="MF_01467">
    <property type="entry name" value="Hypx_phosphoribosyltr"/>
    <property type="match status" value="1"/>
</dbReference>
<dbReference type="InterPro" id="IPR026597">
    <property type="entry name" value="HGPRTase-like"/>
</dbReference>
<dbReference type="InterPro" id="IPR000836">
    <property type="entry name" value="PRibTrfase_dom"/>
</dbReference>
<dbReference type="InterPro" id="IPR029057">
    <property type="entry name" value="PRTase-like"/>
</dbReference>
<dbReference type="InterPro" id="IPR050118">
    <property type="entry name" value="Pur/Pyrimidine_PRTase"/>
</dbReference>
<dbReference type="NCBIfam" id="NF040646">
    <property type="entry name" value="HPT_Archaea"/>
    <property type="match status" value="1"/>
</dbReference>
<dbReference type="NCBIfam" id="NF002635">
    <property type="entry name" value="PRK02304.1-4"/>
    <property type="match status" value="1"/>
</dbReference>
<dbReference type="PANTHER" id="PTHR43864">
    <property type="entry name" value="HYPOXANTHINE/GUANINE PHOSPHORIBOSYLTRANSFERASE"/>
    <property type="match status" value="1"/>
</dbReference>
<dbReference type="PANTHER" id="PTHR43864:SF1">
    <property type="entry name" value="XANTHINE PHOSPHORIBOSYLTRANSFERASE"/>
    <property type="match status" value="1"/>
</dbReference>
<dbReference type="Pfam" id="PF00156">
    <property type="entry name" value="Pribosyltran"/>
    <property type="match status" value="1"/>
</dbReference>
<dbReference type="SUPFAM" id="SSF53271">
    <property type="entry name" value="PRTase-like"/>
    <property type="match status" value="1"/>
</dbReference>
<dbReference type="PROSITE" id="PS00103">
    <property type="entry name" value="PUR_PYR_PR_TRANSFER"/>
    <property type="match status" value="1"/>
</dbReference>
<proteinExistence type="inferred from homology"/>